<accession>Q9KD29</accession>
<keyword id="KW-1003">Cell membrane</keyword>
<keyword id="KW-0406">Ion transport</keyword>
<keyword id="KW-0472">Membrane</keyword>
<keyword id="KW-1185">Reference proteome</keyword>
<keyword id="KW-0812">Transmembrane</keyword>
<keyword id="KW-1133">Transmembrane helix</keyword>
<keyword id="KW-0813">Transport</keyword>
<comment type="function">
    <text evidence="1">This protein is probably a component of a manganese permease, a binding protein-dependent, ATP-driven transport system.</text>
</comment>
<comment type="subcellular location">
    <subcellularLocation>
        <location evidence="3">Cell membrane</location>
        <topology evidence="3">Multi-pass membrane protein</topology>
    </subcellularLocation>
</comment>
<comment type="similarity">
    <text evidence="3">Belongs to the ABC-3 integral membrane protein family.</text>
</comment>
<evidence type="ECO:0000250" key="1"/>
<evidence type="ECO:0000255" key="2"/>
<evidence type="ECO:0000305" key="3"/>
<proteinExistence type="inferred from homology"/>
<feature type="chain" id="PRO_0000171149" description="Manganese transport system membrane protein MntC">
    <location>
        <begin position="1"/>
        <end position="292"/>
    </location>
</feature>
<feature type="transmembrane region" description="Helical" evidence="2">
    <location>
        <begin position="20"/>
        <end position="40"/>
    </location>
</feature>
<feature type="transmembrane region" description="Helical" evidence="2">
    <location>
        <begin position="58"/>
        <end position="78"/>
    </location>
</feature>
<feature type="transmembrane region" description="Helical" evidence="2">
    <location>
        <begin position="96"/>
        <end position="116"/>
    </location>
</feature>
<feature type="transmembrane region" description="Helical" evidence="2">
    <location>
        <begin position="137"/>
        <end position="157"/>
    </location>
</feature>
<feature type="transmembrane region" description="Helical" evidence="2">
    <location>
        <begin position="168"/>
        <end position="188"/>
    </location>
</feature>
<feature type="transmembrane region" description="Helical" evidence="2">
    <location>
        <begin position="190"/>
        <end position="210"/>
    </location>
</feature>
<feature type="transmembrane region" description="Helical" evidence="2">
    <location>
        <begin position="226"/>
        <end position="246"/>
    </location>
</feature>
<feature type="transmembrane region" description="Helical" evidence="2">
    <location>
        <begin position="249"/>
        <end position="269"/>
    </location>
</feature>
<name>MNTC_HALH5</name>
<protein>
    <recommendedName>
        <fullName>Manganese transport system membrane protein MntC</fullName>
    </recommendedName>
</protein>
<dbReference type="EMBL" id="BA000004">
    <property type="protein sequence ID" value="BAB05109.1"/>
    <property type="molecule type" value="Genomic_DNA"/>
</dbReference>
<dbReference type="PIR" id="F83823">
    <property type="entry name" value="F83823"/>
</dbReference>
<dbReference type="RefSeq" id="WP_010897555.1">
    <property type="nucleotide sequence ID" value="NC_002570.2"/>
</dbReference>
<dbReference type="SMR" id="Q9KD29"/>
<dbReference type="STRING" id="272558.gene:10727284"/>
<dbReference type="KEGG" id="bha:BH1390"/>
<dbReference type="eggNOG" id="COG1108">
    <property type="taxonomic scope" value="Bacteria"/>
</dbReference>
<dbReference type="HOGENOM" id="CLU_028808_4_0_9"/>
<dbReference type="OrthoDB" id="9788905at2"/>
<dbReference type="Proteomes" id="UP000001258">
    <property type="component" value="Chromosome"/>
</dbReference>
<dbReference type="GO" id="GO:0043190">
    <property type="term" value="C:ATP-binding cassette (ABC) transporter complex"/>
    <property type="evidence" value="ECO:0007669"/>
    <property type="project" value="InterPro"/>
</dbReference>
<dbReference type="GO" id="GO:0006811">
    <property type="term" value="P:monoatomic ion transport"/>
    <property type="evidence" value="ECO:0007669"/>
    <property type="project" value="UniProtKB-KW"/>
</dbReference>
<dbReference type="GO" id="GO:0010043">
    <property type="term" value="P:response to zinc ion"/>
    <property type="evidence" value="ECO:0007669"/>
    <property type="project" value="TreeGrafter"/>
</dbReference>
<dbReference type="GO" id="GO:0055085">
    <property type="term" value="P:transmembrane transport"/>
    <property type="evidence" value="ECO:0007669"/>
    <property type="project" value="InterPro"/>
</dbReference>
<dbReference type="CDD" id="cd06550">
    <property type="entry name" value="TM_ABC_iron-siderophores_like"/>
    <property type="match status" value="1"/>
</dbReference>
<dbReference type="FunFam" id="1.10.3470.10:FF:000003">
    <property type="entry name" value="Iron ABC transporter permease SitD"/>
    <property type="match status" value="1"/>
</dbReference>
<dbReference type="Gene3D" id="1.10.3470.10">
    <property type="entry name" value="ABC transporter involved in vitamin B12 uptake, BtuC"/>
    <property type="match status" value="1"/>
</dbReference>
<dbReference type="InterPro" id="IPR037294">
    <property type="entry name" value="ABC_BtuC-like"/>
</dbReference>
<dbReference type="InterPro" id="IPR001626">
    <property type="entry name" value="ABC_TroCD"/>
</dbReference>
<dbReference type="PANTHER" id="PTHR30477">
    <property type="entry name" value="ABC-TRANSPORTER METAL-BINDING PROTEIN"/>
    <property type="match status" value="1"/>
</dbReference>
<dbReference type="PANTHER" id="PTHR30477:SF13">
    <property type="entry name" value="IRON TRANSPORT SYSTEM MEMBRANE PROTEIN HI_0360-RELATED"/>
    <property type="match status" value="1"/>
</dbReference>
<dbReference type="Pfam" id="PF00950">
    <property type="entry name" value="ABC-3"/>
    <property type="match status" value="1"/>
</dbReference>
<dbReference type="SUPFAM" id="SSF81345">
    <property type="entry name" value="ABC transporter involved in vitamin B12 uptake, BtuC"/>
    <property type="match status" value="1"/>
</dbReference>
<sequence>MSNLTFFFDQLLSYSYLQQALTAAILVGIICGVIGCFIILRGMALMGDAISHAVLPGVVIAYMIGASFFIGAVITGVITALAIGYVSQNSRVKEDSAIGILFTAAFALGIVLITGMRGTGVDLWHILFGNVLAVSRTDLWVTLGIGLFVLLIIILFYRPLLLSTFDPVMAQATGIPVQMIHYLLMLLLSLVTVAALQTVGIVLVVAMLITPGATAYLLTNRLPVMLCLAAMFGVISAIAGIYFSVIYDVASGASIVLVASTLFALAFFFSPKQGVLTRYWRGKRAKEMSATS</sequence>
<reference key="1">
    <citation type="journal article" date="2000" name="Nucleic Acids Res.">
        <title>Complete genome sequence of the alkaliphilic bacterium Bacillus halodurans and genomic sequence comparison with Bacillus subtilis.</title>
        <authorList>
            <person name="Takami H."/>
            <person name="Nakasone K."/>
            <person name="Takaki Y."/>
            <person name="Maeno G."/>
            <person name="Sasaki R."/>
            <person name="Masui N."/>
            <person name="Fuji F."/>
            <person name="Hirama C."/>
            <person name="Nakamura Y."/>
            <person name="Ogasawara N."/>
            <person name="Kuhara S."/>
            <person name="Horikoshi K."/>
        </authorList>
    </citation>
    <scope>NUCLEOTIDE SEQUENCE [LARGE SCALE GENOMIC DNA]</scope>
    <source>
        <strain>ATCC BAA-125 / DSM 18197 / FERM 7344 / JCM 9153 / C-125</strain>
    </source>
</reference>
<organism>
    <name type="scientific">Halalkalibacterium halodurans (strain ATCC BAA-125 / DSM 18197 / FERM 7344 / JCM 9153 / C-125)</name>
    <name type="common">Bacillus halodurans</name>
    <dbReference type="NCBI Taxonomy" id="272558"/>
    <lineage>
        <taxon>Bacteria</taxon>
        <taxon>Bacillati</taxon>
        <taxon>Bacillota</taxon>
        <taxon>Bacilli</taxon>
        <taxon>Bacillales</taxon>
        <taxon>Bacillaceae</taxon>
        <taxon>Halalkalibacterium (ex Joshi et al. 2022)</taxon>
    </lineage>
</organism>
<gene>
    <name type="primary">mntC</name>
    <name type="ordered locus">BH1390</name>
</gene>